<comment type="function">
    <text evidence="5 7 8 9 10 11 12 13">Functions to regulate alternative splicing in neurons by binding pre-mRNA in a sequence-specific manner to activate exon inclusion or exclusion (PubMed:14615540, PubMed:15933722, PubMed:17065982, PubMed:8558240). It binds specifically to the sequences 5'-YCAY-3' and regulates splicing in only a subset of regulated exons (PubMed:14615540, PubMed:8558240, PubMed:9154818). Binding to an exonic 5'-YCAY-3' cluster changes the protein complexes assembled on pre-mRNA, blocking U1 snRNP binding and exon inclusion, whereas binding to an intronic 5'-YCAY-3' cluster enhances spliceosome assembly and exon inclusion (PubMed:10719891). Binding to 5'-YCAY-3' clusters results in a local and asymmetric action to regulate spliceosome assembly and alternative splicing in neurons. Binding to an exonic 5'-YCAY-3' cluster changed the protein complexes assembled on pre-mRNA, blocking U1 snRNP (small nuclear ribonucleoprotein) binding and exon inclusion, whereas binding to an intronic 5'-YCAY-3' cluster enhanced spliceosome assembly and exon inclusion (PubMed:15933722, PubMed:17065982). With NOVA1, they perform unique biological functions in different brain areas and cell types (PubMed:30638744). Autoregulates its own expression by acting as a splicing repressor (PubMed:15933722). Acts to activate the inclusion of exon E3A in the glycine receptor alpha-2 chain and of exon E9 in gamma-aminobutyric-acid receptor gamma-2 subunit via a distal downstream UCAU-rich intronic splicing enhancer (PubMed:12808107). Acts to regulate a novel glycine receptor alpha-2 chain splice variant (alpha-2N) in developing spinal cord (PubMed:17065982).</text>
</comment>
<comment type="subunit">
    <text evidence="6">Interacts with PTBP2; the interaction is direct.</text>
</comment>
<comment type="subcellular location">
    <subcellularLocation>
        <location evidence="12">Nucleus</location>
    </subcellularLocation>
</comment>
<comment type="tissue specificity">
    <text evidence="6 12">Expressed in neurons of the cortex, sub-cortex, cerebellum and brainstem (at protein level) (PubMed:10829067). Expressed in motor neurons, but not in glia (PubMed:10829067).</text>
</comment>
<comment type="domain">
    <text evidence="1">The KH domain consists of approximately 70 amino acids and includes a conserved hydrophobic core, an invariant Gly-X-X-Gly motif, and an additional variable segment. The third KH domain (KH3) binds a hairpin RNA loop containing the 5'-UCAY-3' motif on targeted molecules. RNA binding by KH3 requires residues C-terminal to the KH domain.</text>
</comment>
<comment type="disease">
    <text evidence="5">Defects in Nova1 leads to neuronal death in spinal and brainstem neurons.</text>
</comment>
<evidence type="ECO:0000250" key="1">
    <source>
        <dbReference type="UniProtKB" id="P51513"/>
    </source>
</evidence>
<evidence type="ECO:0000255" key="2"/>
<evidence type="ECO:0000255" key="3">
    <source>
        <dbReference type="PROSITE-ProRule" id="PRU00117"/>
    </source>
</evidence>
<evidence type="ECO:0000256" key="4">
    <source>
        <dbReference type="SAM" id="MobiDB-lite"/>
    </source>
</evidence>
<evidence type="ECO:0000269" key="5">
    <source>
    </source>
</evidence>
<evidence type="ECO:0000269" key="6">
    <source>
    </source>
</evidence>
<evidence type="ECO:0000269" key="7">
    <source>
    </source>
</evidence>
<evidence type="ECO:0000269" key="8">
    <source>
    </source>
</evidence>
<evidence type="ECO:0000269" key="9">
    <source>
    </source>
</evidence>
<evidence type="ECO:0000269" key="10">
    <source>
    </source>
</evidence>
<evidence type="ECO:0000269" key="11">
    <source>
    </source>
</evidence>
<evidence type="ECO:0000269" key="12">
    <source>
    </source>
</evidence>
<evidence type="ECO:0000269" key="13">
    <source>
    </source>
</evidence>
<evidence type="ECO:0000305" key="14"/>
<evidence type="ECO:0000312" key="15">
    <source>
        <dbReference type="MGI" id="MGI:104297"/>
    </source>
</evidence>
<feature type="chain" id="PRO_0000050117" description="RNA-binding protein Nova-1">
    <location>
        <begin position="1"/>
        <end position="507"/>
    </location>
</feature>
<feature type="domain" description="KH 1" evidence="3">
    <location>
        <begin position="49"/>
        <end position="116"/>
    </location>
</feature>
<feature type="domain" description="KH 2" evidence="3">
    <location>
        <begin position="171"/>
        <end position="237"/>
    </location>
</feature>
<feature type="domain" description="KH 3" evidence="3">
    <location>
        <begin position="421"/>
        <end position="488"/>
    </location>
</feature>
<feature type="region of interest" description="Disordered" evidence="4">
    <location>
        <begin position="1"/>
        <end position="44"/>
    </location>
</feature>
<feature type="region of interest" description="Disordered" evidence="4">
    <location>
        <begin position="139"/>
        <end position="171"/>
    </location>
</feature>
<feature type="region of interest" description="Required for RNA binding" evidence="1">
    <location>
        <begin position="419"/>
        <end position="503"/>
    </location>
</feature>
<feature type="short sequence motif" description="Bipartite nuclear localization signal" evidence="2">
    <location>
        <begin position="27"/>
        <end position="43"/>
    </location>
</feature>
<feature type="compositionally biased region" description="Low complexity" evidence="4">
    <location>
        <begin position="150"/>
        <end position="169"/>
    </location>
</feature>
<feature type="modified residue" description="Phosphoserine" evidence="9">
    <location>
        <position position="154"/>
    </location>
</feature>
<feature type="mutagenesis site" description="Strongly decreases RNA-binding." evidence="12">
    <original>L</original>
    <variation>N</variation>
    <location>
        <position position="444"/>
    </location>
</feature>
<accession>Q9JKN6</accession>
<accession>Q8C8B9</accession>
<proteinExistence type="evidence at protein level"/>
<sequence length="507" mass="51756">MMAAAPIQQNGTHTGVPIDLDPPDSRKRPLEAPPEAGSTKRTNTGEDGQYFLKVLIPSYAAGSIIGKGGQTIVQLQKETGATIKLSKSKDFYPGTTERVCLIQGTIEALNAVHGFIAEKIREMPQNVAKTEPVSILQPQTTVNPDRIKQTLPSSPTTTKSSPSDPMTTSRANQVKIIVPNSTAGLIIGKGGATVKAIMEQSGAWVQLSQKPDGINLQERVVTVSGEPEQNRKAVELIIQKIQEDPQSGSCLNISYANVTGPVANSNPTGSPYANTAEVLPTAAAAAGLLGHANLAGVAAFPAVLSGFTGNDLVAITSALNTLASYGYNLNTLGLGLSQAAATGALAAAAASANPAAAAANLLATYASEASASGSTAGGTAGTFALGSLAAATAATNGYFGAASPLAASAILGTEKSTDGSKDVVEIAVPENLVGAILGKGGKTLVEYQELTGARIQISKKGEFVPGTRNRKVTITGTPAATQAAQYLITQRITYEQGVRAANPQKVG</sequence>
<reference key="1">
    <citation type="journal article" date="2009" name="PLoS Biol.">
        <title>Lineage-specific biology revealed by a finished genome assembly of the mouse.</title>
        <authorList>
            <person name="Church D.M."/>
            <person name="Goodstadt L."/>
            <person name="Hillier L.W."/>
            <person name="Zody M.C."/>
            <person name="Goldstein S."/>
            <person name="She X."/>
            <person name="Bult C.J."/>
            <person name="Agarwala R."/>
            <person name="Cherry J.L."/>
            <person name="DiCuccio M."/>
            <person name="Hlavina W."/>
            <person name="Kapustin Y."/>
            <person name="Meric P."/>
            <person name="Maglott D."/>
            <person name="Birtle Z."/>
            <person name="Marques A.C."/>
            <person name="Graves T."/>
            <person name="Zhou S."/>
            <person name="Teague B."/>
            <person name="Potamousis K."/>
            <person name="Churas C."/>
            <person name="Place M."/>
            <person name="Herschleb J."/>
            <person name="Runnheim R."/>
            <person name="Forrest D."/>
            <person name="Amos-Landgraf J."/>
            <person name="Schwartz D.C."/>
            <person name="Cheng Z."/>
            <person name="Lindblad-Toh K."/>
            <person name="Eichler E.E."/>
            <person name="Ponting C.P."/>
        </authorList>
    </citation>
    <scope>NUCLEOTIDE SEQUENCE [LARGE SCALE GENOMIC DNA]</scope>
    <source>
        <strain>C57BL/6J</strain>
    </source>
</reference>
<reference key="2">
    <citation type="journal article" date="2000" name="Mamm. Genome">
        <title>Neuromuscular ataxia: a new spontaneous mutation in the mouse.</title>
        <authorList>
            <person name="Ward-Bailey P.F."/>
            <person name="Wood B."/>
            <person name="Johnson K.R."/>
            <person name="Bronson R.T."/>
            <person name="Donahue L.R."/>
            <person name="Davisson M.T."/>
        </authorList>
    </citation>
    <scope>NUCLEOTIDE SEQUENCE [MRNA] OF 15-507</scope>
    <source>
        <strain>CBA/J</strain>
        <tissue>Brain</tissue>
    </source>
</reference>
<reference key="3">
    <citation type="journal article" date="2005" name="Science">
        <title>The transcriptional landscape of the mammalian genome.</title>
        <authorList>
            <person name="Carninci P."/>
            <person name="Kasukawa T."/>
            <person name="Katayama S."/>
            <person name="Gough J."/>
            <person name="Frith M.C."/>
            <person name="Maeda N."/>
            <person name="Oyama R."/>
            <person name="Ravasi T."/>
            <person name="Lenhard B."/>
            <person name="Wells C."/>
            <person name="Kodzius R."/>
            <person name="Shimokawa K."/>
            <person name="Bajic V.B."/>
            <person name="Brenner S.E."/>
            <person name="Batalov S."/>
            <person name="Forrest A.R."/>
            <person name="Zavolan M."/>
            <person name="Davis M.J."/>
            <person name="Wilming L.G."/>
            <person name="Aidinis V."/>
            <person name="Allen J.E."/>
            <person name="Ambesi-Impiombato A."/>
            <person name="Apweiler R."/>
            <person name="Aturaliya R.N."/>
            <person name="Bailey T.L."/>
            <person name="Bansal M."/>
            <person name="Baxter L."/>
            <person name="Beisel K.W."/>
            <person name="Bersano T."/>
            <person name="Bono H."/>
            <person name="Chalk A.M."/>
            <person name="Chiu K.P."/>
            <person name="Choudhary V."/>
            <person name="Christoffels A."/>
            <person name="Clutterbuck D.R."/>
            <person name="Crowe M.L."/>
            <person name="Dalla E."/>
            <person name="Dalrymple B.P."/>
            <person name="de Bono B."/>
            <person name="Della Gatta G."/>
            <person name="di Bernardo D."/>
            <person name="Down T."/>
            <person name="Engstrom P."/>
            <person name="Fagiolini M."/>
            <person name="Faulkner G."/>
            <person name="Fletcher C.F."/>
            <person name="Fukushima T."/>
            <person name="Furuno M."/>
            <person name="Futaki S."/>
            <person name="Gariboldi M."/>
            <person name="Georgii-Hemming P."/>
            <person name="Gingeras T.R."/>
            <person name="Gojobori T."/>
            <person name="Green R.E."/>
            <person name="Gustincich S."/>
            <person name="Harbers M."/>
            <person name="Hayashi Y."/>
            <person name="Hensch T.K."/>
            <person name="Hirokawa N."/>
            <person name="Hill D."/>
            <person name="Huminiecki L."/>
            <person name="Iacono M."/>
            <person name="Ikeo K."/>
            <person name="Iwama A."/>
            <person name="Ishikawa T."/>
            <person name="Jakt M."/>
            <person name="Kanapin A."/>
            <person name="Katoh M."/>
            <person name="Kawasawa Y."/>
            <person name="Kelso J."/>
            <person name="Kitamura H."/>
            <person name="Kitano H."/>
            <person name="Kollias G."/>
            <person name="Krishnan S.P."/>
            <person name="Kruger A."/>
            <person name="Kummerfeld S.K."/>
            <person name="Kurochkin I.V."/>
            <person name="Lareau L.F."/>
            <person name="Lazarevic D."/>
            <person name="Lipovich L."/>
            <person name="Liu J."/>
            <person name="Liuni S."/>
            <person name="McWilliam S."/>
            <person name="Madan Babu M."/>
            <person name="Madera M."/>
            <person name="Marchionni L."/>
            <person name="Matsuda H."/>
            <person name="Matsuzawa S."/>
            <person name="Miki H."/>
            <person name="Mignone F."/>
            <person name="Miyake S."/>
            <person name="Morris K."/>
            <person name="Mottagui-Tabar S."/>
            <person name="Mulder N."/>
            <person name="Nakano N."/>
            <person name="Nakauchi H."/>
            <person name="Ng P."/>
            <person name="Nilsson R."/>
            <person name="Nishiguchi S."/>
            <person name="Nishikawa S."/>
            <person name="Nori F."/>
            <person name="Ohara O."/>
            <person name="Okazaki Y."/>
            <person name="Orlando V."/>
            <person name="Pang K.C."/>
            <person name="Pavan W.J."/>
            <person name="Pavesi G."/>
            <person name="Pesole G."/>
            <person name="Petrovsky N."/>
            <person name="Piazza S."/>
            <person name="Reed J."/>
            <person name="Reid J.F."/>
            <person name="Ring B.Z."/>
            <person name="Ringwald M."/>
            <person name="Rost B."/>
            <person name="Ruan Y."/>
            <person name="Salzberg S.L."/>
            <person name="Sandelin A."/>
            <person name="Schneider C."/>
            <person name="Schoenbach C."/>
            <person name="Sekiguchi K."/>
            <person name="Semple C.A."/>
            <person name="Seno S."/>
            <person name="Sessa L."/>
            <person name="Sheng Y."/>
            <person name="Shibata Y."/>
            <person name="Shimada H."/>
            <person name="Shimada K."/>
            <person name="Silva D."/>
            <person name="Sinclair B."/>
            <person name="Sperling S."/>
            <person name="Stupka E."/>
            <person name="Sugiura K."/>
            <person name="Sultana R."/>
            <person name="Takenaka Y."/>
            <person name="Taki K."/>
            <person name="Tammoja K."/>
            <person name="Tan S.L."/>
            <person name="Tang S."/>
            <person name="Taylor M.S."/>
            <person name="Tegner J."/>
            <person name="Teichmann S.A."/>
            <person name="Ueda H.R."/>
            <person name="van Nimwegen E."/>
            <person name="Verardo R."/>
            <person name="Wei C.L."/>
            <person name="Yagi K."/>
            <person name="Yamanishi H."/>
            <person name="Zabarovsky E."/>
            <person name="Zhu S."/>
            <person name="Zimmer A."/>
            <person name="Hide W."/>
            <person name="Bult C."/>
            <person name="Grimmond S.M."/>
            <person name="Teasdale R.D."/>
            <person name="Liu E.T."/>
            <person name="Brusic V."/>
            <person name="Quackenbush J."/>
            <person name="Wahlestedt C."/>
            <person name="Mattick J.S."/>
            <person name="Hume D.A."/>
            <person name="Kai C."/>
            <person name="Sasaki D."/>
            <person name="Tomaru Y."/>
            <person name="Fukuda S."/>
            <person name="Kanamori-Katayama M."/>
            <person name="Suzuki M."/>
            <person name="Aoki J."/>
            <person name="Arakawa T."/>
            <person name="Iida J."/>
            <person name="Imamura K."/>
            <person name="Itoh M."/>
            <person name="Kato T."/>
            <person name="Kawaji H."/>
            <person name="Kawagashira N."/>
            <person name="Kawashima T."/>
            <person name="Kojima M."/>
            <person name="Kondo S."/>
            <person name="Konno H."/>
            <person name="Nakano K."/>
            <person name="Ninomiya N."/>
            <person name="Nishio T."/>
            <person name="Okada M."/>
            <person name="Plessy C."/>
            <person name="Shibata K."/>
            <person name="Shiraki T."/>
            <person name="Suzuki S."/>
            <person name="Tagami M."/>
            <person name="Waki K."/>
            <person name="Watahiki A."/>
            <person name="Okamura-Oho Y."/>
            <person name="Suzuki H."/>
            <person name="Kawai J."/>
            <person name="Hayashizaki Y."/>
        </authorList>
    </citation>
    <scope>NUCLEOTIDE SEQUENCE [LARGE SCALE MRNA] OF 264-507</scope>
    <source>
        <strain>C57BL/6J</strain>
        <tissue>Cerebellum</tissue>
    </source>
</reference>
<reference key="4">
    <citation type="journal article" date="1996" name="J. Neurosci.">
        <title>The onconeural antigen Nova-1 is a neuron-specific RNA-binding protein, the activity of which is inhibited by paraneoplastic antibodies.</title>
        <authorList>
            <person name="Buckanovich R.J."/>
            <person name="Yang Y.Y."/>
            <person name="Darnell R.B."/>
        </authorList>
    </citation>
    <scope>FUNCTION</scope>
    <scope>TISSUE SPECIFICITY</scope>
    <scope>SUBCELLULAR LOCATION</scope>
    <scope>RNA-BINDING</scope>
    <scope>MUTAGENESIS OF LEU-444</scope>
</reference>
<reference key="5">
    <citation type="journal article" date="1997" name="Mol. Cell. Biol.">
        <title>The neuronal RNA binding protein Nova-1 recognizes specific RNA targets in vitro and in vivo.</title>
        <authorList>
            <person name="Buckanovich R.J."/>
            <person name="Darnell R.B."/>
        </authorList>
    </citation>
    <scope>FUNCTION</scope>
    <scope>RNA-BINDING</scope>
</reference>
<reference key="6">
    <citation type="journal article" date="2000" name="Neuron">
        <title>Nova-1 regulates neuron-specific alternative splicing and is essential for neuronal viability.</title>
        <authorList>
            <person name="Jensen K.B."/>
            <person name="Dredge B.K."/>
            <person name="Stefani G."/>
            <person name="Zhong R."/>
            <person name="Buckanovich R.J."/>
            <person name="Okano H.J."/>
            <person name="Yang Y.Y.-L."/>
            <person name="Darnell R.B."/>
        </authorList>
    </citation>
    <scope>FUNCTION</scope>
    <scope>INVOLVEMENT IN NEURONAL DISEASE</scope>
</reference>
<reference key="7">
    <citation type="journal article" date="2000" name="Proc. Natl. Acad. Sci. U.S.A.">
        <title>A brain-enriched polypyrimidine tract-binding protein antagonizes the ability of Nova to regulate neuron-specific alternative splicing.</title>
        <authorList>
            <person name="Polydorides A.D."/>
            <person name="Okano H.J."/>
            <person name="Yang Y.Y.L."/>
            <person name="Stefani G."/>
            <person name="Darnell R.B."/>
        </authorList>
    </citation>
    <scope>INTERACTION WITH PTBP2</scope>
    <scope>SUBCELLULAR LOCATION</scope>
    <scope>TISSUE SPECIFICITY</scope>
</reference>
<reference key="8">
    <citation type="journal article" date="2003" name="Mol. Cell. Biol.">
        <title>Nova regulates GABA(A) receptor gamma2 alternative splicing via a distal downstream UCAU-rich intronic splicing enhancer.</title>
        <authorList>
            <person name="Dredge B.K."/>
            <person name="Darnell R.B."/>
        </authorList>
    </citation>
    <scope>FUNCTION</scope>
</reference>
<reference key="9">
    <citation type="journal article" date="2003" name="Science">
        <title>CLIP identifies Nova-regulated RNA networks in the brain.</title>
        <authorList>
            <person name="Ule J."/>
            <person name="Jensen K.B."/>
            <person name="Ruggiu M."/>
            <person name="Mele A."/>
            <person name="Ule A."/>
            <person name="Darnell R.B."/>
        </authorList>
    </citation>
    <scope>FUNCTION</scope>
</reference>
<reference key="10">
    <citation type="journal article" date="2005" name="EMBO J.">
        <title>Nova autoregulation reveals dual functions in neuronal splicing.</title>
        <authorList>
            <person name="Dredge B.K."/>
            <person name="Stefani G."/>
            <person name="Engelhard C.C."/>
            <person name="Darnell R.B."/>
        </authorList>
    </citation>
    <scope>FUNCTION</scope>
    <scope>PHOSPHORYLATION AT SER-154</scope>
</reference>
<reference key="11">
    <citation type="journal article" date="2006" name="Nature">
        <title>An RNA map predicting Nova-dependent splicing regulation.</title>
        <authorList>
            <person name="Ule J."/>
            <person name="Stefani G."/>
            <person name="Mele A."/>
            <person name="Ruggiu M."/>
            <person name="Wang X."/>
            <person name="Taneri B."/>
            <person name="Gaasterland T."/>
            <person name="Blencowe B.J."/>
            <person name="Darnell R.B."/>
        </authorList>
    </citation>
    <scope>FUNCTION</scope>
</reference>
<reference key="12">
    <citation type="journal article" date="2010" name="Cell">
        <title>A tissue-specific atlas of mouse protein phosphorylation and expression.</title>
        <authorList>
            <person name="Huttlin E.L."/>
            <person name="Jedrychowski M.P."/>
            <person name="Elias J.E."/>
            <person name="Goswami T."/>
            <person name="Rad R."/>
            <person name="Beausoleil S.A."/>
            <person name="Villen J."/>
            <person name="Haas W."/>
            <person name="Sowa M.E."/>
            <person name="Gygi S.P."/>
        </authorList>
    </citation>
    <scope>IDENTIFICATION BY MASS SPECTROMETRY [LARGE SCALE ANALYSIS]</scope>
    <source>
        <tissue>Brain</tissue>
    </source>
</reference>
<reference key="13">
    <citation type="journal article" date="2019" name="Neuron">
        <title>Differential NOVA2-Mediated Splicing in Excitatory and Inhibitory Neurons Regulates Cortical Development and Cerebellar Function.</title>
        <authorList>
            <person name="Saito Y."/>
            <person name="Yuan Y."/>
            <person name="Zucker-Scharff I."/>
            <person name="Fak J.J."/>
            <person name="Jereb S."/>
            <person name="Tajima Y."/>
            <person name="Licatalosi D.D."/>
            <person name="Darnell R.B."/>
        </authorList>
    </citation>
    <scope>FUNCTION</scope>
    <scope>TISSUE SPECIFICITY</scope>
</reference>
<dbReference type="EMBL" id="AC108802">
    <property type="status" value="NOT_ANNOTATED_CDS"/>
    <property type="molecule type" value="Genomic_DNA"/>
</dbReference>
<dbReference type="EMBL" id="AC156636">
    <property type="status" value="NOT_ANNOTATED_CDS"/>
    <property type="molecule type" value="Genomic_DNA"/>
</dbReference>
<dbReference type="EMBL" id="AF232828">
    <property type="protein sequence ID" value="AAF35907.1"/>
    <property type="molecule type" value="mRNA"/>
</dbReference>
<dbReference type="EMBL" id="AK047565">
    <property type="protein sequence ID" value="BAC33088.1"/>
    <property type="molecule type" value="mRNA"/>
</dbReference>
<dbReference type="CCDS" id="CCDS49058.1"/>
<dbReference type="RefSeq" id="NP_067336.1">
    <property type="nucleotide sequence ID" value="NM_021361.2"/>
</dbReference>
<dbReference type="SMR" id="Q9JKN6"/>
<dbReference type="BioGRID" id="576757">
    <property type="interactions" value="3"/>
</dbReference>
<dbReference type="FunCoup" id="Q9JKN6">
    <property type="interactions" value="4313"/>
</dbReference>
<dbReference type="IntAct" id="Q9JKN6">
    <property type="interactions" value="1"/>
</dbReference>
<dbReference type="STRING" id="10090.ENSMUSP00000021438"/>
<dbReference type="iPTMnet" id="Q9JKN6"/>
<dbReference type="PhosphoSitePlus" id="Q9JKN6"/>
<dbReference type="SwissPalm" id="Q9JKN6"/>
<dbReference type="PaxDb" id="10090-ENSMUSP00000021438"/>
<dbReference type="PeptideAtlas" id="Q9JKN6"/>
<dbReference type="ProteomicsDB" id="252847"/>
<dbReference type="Antibodypedia" id="133">
    <property type="antibodies" value="258 antibodies from 33 providers"/>
</dbReference>
<dbReference type="Ensembl" id="ENSMUST00000021438.8">
    <property type="protein sequence ID" value="ENSMUSP00000021438.7"/>
    <property type="gene ID" value="ENSMUSG00000021047.8"/>
</dbReference>
<dbReference type="GeneID" id="664883"/>
<dbReference type="KEGG" id="mmu:664883"/>
<dbReference type="UCSC" id="uc007nmd.2">
    <property type="organism name" value="mouse"/>
</dbReference>
<dbReference type="AGR" id="MGI:104297"/>
<dbReference type="CTD" id="4857"/>
<dbReference type="MGI" id="MGI:104297">
    <property type="gene designation" value="Nova1"/>
</dbReference>
<dbReference type="VEuPathDB" id="HostDB:ENSMUSG00000021047"/>
<dbReference type="eggNOG" id="KOG2191">
    <property type="taxonomic scope" value="Eukaryota"/>
</dbReference>
<dbReference type="GeneTree" id="ENSGT00940000155573"/>
<dbReference type="HOGENOM" id="CLU_022670_1_1_1"/>
<dbReference type="InParanoid" id="Q9JKN6"/>
<dbReference type="OMA" id="KYANTPF"/>
<dbReference type="OrthoDB" id="441329at2759"/>
<dbReference type="PhylomeDB" id="Q9JKN6"/>
<dbReference type="TreeFam" id="TF316981"/>
<dbReference type="BioGRID-ORCS" id="664883">
    <property type="hits" value="0 hits in 78 CRISPR screens"/>
</dbReference>
<dbReference type="ChiTaRS" id="Nova1">
    <property type="organism name" value="mouse"/>
</dbReference>
<dbReference type="PRO" id="PR:Q9JKN6"/>
<dbReference type="Proteomes" id="UP000000589">
    <property type="component" value="Chromosome 12"/>
</dbReference>
<dbReference type="RNAct" id="Q9JKN6">
    <property type="molecule type" value="protein"/>
</dbReference>
<dbReference type="Bgee" id="ENSMUSG00000021047">
    <property type="expression patterns" value="Expressed in lumbar subsegment of spinal cord and 189 other cell types or tissues"/>
</dbReference>
<dbReference type="ExpressionAtlas" id="Q9JKN6">
    <property type="expression patterns" value="baseline and differential"/>
</dbReference>
<dbReference type="GO" id="GO:0005730">
    <property type="term" value="C:nucleolus"/>
    <property type="evidence" value="ECO:0007669"/>
    <property type="project" value="Ensembl"/>
</dbReference>
<dbReference type="GO" id="GO:0005654">
    <property type="term" value="C:nucleoplasm"/>
    <property type="evidence" value="ECO:0007669"/>
    <property type="project" value="Ensembl"/>
</dbReference>
<dbReference type="GO" id="GO:0005634">
    <property type="term" value="C:nucleus"/>
    <property type="evidence" value="ECO:0000314"/>
    <property type="project" value="UniProtKB"/>
</dbReference>
<dbReference type="GO" id="GO:0003730">
    <property type="term" value="F:mRNA 3'-UTR binding"/>
    <property type="evidence" value="ECO:0000314"/>
    <property type="project" value="MGI"/>
</dbReference>
<dbReference type="GO" id="GO:0003729">
    <property type="term" value="F:mRNA binding"/>
    <property type="evidence" value="ECO:0000314"/>
    <property type="project" value="UniProtKB"/>
</dbReference>
<dbReference type="GO" id="GO:0003723">
    <property type="term" value="F:RNA binding"/>
    <property type="evidence" value="ECO:0000314"/>
    <property type="project" value="UniProtKB"/>
</dbReference>
<dbReference type="GO" id="GO:1990825">
    <property type="term" value="F:sequence-specific mRNA binding"/>
    <property type="evidence" value="ECO:0000314"/>
    <property type="project" value="UniProtKB"/>
</dbReference>
<dbReference type="GO" id="GO:0000398">
    <property type="term" value="P:mRNA splicing, via spliceosome"/>
    <property type="evidence" value="ECO:0000314"/>
    <property type="project" value="MGI"/>
</dbReference>
<dbReference type="GO" id="GO:0120163">
    <property type="term" value="P:negative regulation of cold-induced thermogenesis"/>
    <property type="evidence" value="ECO:0000316"/>
    <property type="project" value="YuBioLab"/>
</dbReference>
<dbReference type="GO" id="GO:0007399">
    <property type="term" value="P:nervous system development"/>
    <property type="evidence" value="ECO:0007669"/>
    <property type="project" value="UniProtKB-KW"/>
</dbReference>
<dbReference type="GO" id="GO:0000381">
    <property type="term" value="P:regulation of alternative mRNA splicing, via spliceosome"/>
    <property type="evidence" value="ECO:0000314"/>
    <property type="project" value="UniProtKB"/>
</dbReference>
<dbReference type="GO" id="GO:0051252">
    <property type="term" value="P:regulation of RNA metabolic process"/>
    <property type="evidence" value="ECO:0000316"/>
    <property type="project" value="MGI"/>
</dbReference>
<dbReference type="CDD" id="cd22435">
    <property type="entry name" value="KH-I_NOVA_rpt1"/>
    <property type="match status" value="1"/>
</dbReference>
<dbReference type="CDD" id="cd22436">
    <property type="entry name" value="KH-I_NOVA_rpt2"/>
    <property type="match status" value="1"/>
</dbReference>
<dbReference type="CDD" id="cd09031">
    <property type="entry name" value="KH-I_NOVA_rpt3"/>
    <property type="match status" value="1"/>
</dbReference>
<dbReference type="FunFam" id="3.30.1370.10:FF:000019">
    <property type="entry name" value="RNA-binding protein Nova-1 isoform 1"/>
    <property type="match status" value="1"/>
</dbReference>
<dbReference type="FunFam" id="3.30.1370.10:FF:000020">
    <property type="entry name" value="RNA-binding protein Nova-1 isoform 1"/>
    <property type="match status" value="1"/>
</dbReference>
<dbReference type="FunFam" id="3.30.1370.10:FF:000022">
    <property type="entry name" value="RNA-binding protein Nova-1 isoform 1"/>
    <property type="match status" value="1"/>
</dbReference>
<dbReference type="Gene3D" id="3.30.1370.10">
    <property type="entry name" value="K Homology domain, type 1"/>
    <property type="match status" value="3"/>
</dbReference>
<dbReference type="InterPro" id="IPR047275">
    <property type="entry name" value="KH-I_NOVA_rpt1"/>
</dbReference>
<dbReference type="InterPro" id="IPR047276">
    <property type="entry name" value="KH-I_NOVA_rpt2"/>
</dbReference>
<dbReference type="InterPro" id="IPR047274">
    <property type="entry name" value="KH-I_NOVA_rpt3"/>
</dbReference>
<dbReference type="InterPro" id="IPR004087">
    <property type="entry name" value="KH_dom"/>
</dbReference>
<dbReference type="InterPro" id="IPR004088">
    <property type="entry name" value="KH_dom_type_1"/>
</dbReference>
<dbReference type="InterPro" id="IPR036612">
    <property type="entry name" value="KH_dom_type_1_sf"/>
</dbReference>
<dbReference type="PANTHER" id="PTHR10288">
    <property type="entry name" value="KH DOMAIN CONTAINING RNA BINDING PROTEIN"/>
    <property type="match status" value="1"/>
</dbReference>
<dbReference type="Pfam" id="PF00013">
    <property type="entry name" value="KH_1"/>
    <property type="match status" value="3"/>
</dbReference>
<dbReference type="SMART" id="SM00322">
    <property type="entry name" value="KH"/>
    <property type="match status" value="3"/>
</dbReference>
<dbReference type="SUPFAM" id="SSF54791">
    <property type="entry name" value="Eukaryotic type KH-domain (KH-domain type I)"/>
    <property type="match status" value="3"/>
</dbReference>
<dbReference type="PROSITE" id="PS50084">
    <property type="entry name" value="KH_TYPE_1"/>
    <property type="match status" value="3"/>
</dbReference>
<gene>
    <name evidence="15" type="primary">Nova1</name>
</gene>
<name>NOVA1_MOUSE</name>
<organism>
    <name type="scientific">Mus musculus</name>
    <name type="common">Mouse</name>
    <dbReference type="NCBI Taxonomy" id="10090"/>
    <lineage>
        <taxon>Eukaryota</taxon>
        <taxon>Metazoa</taxon>
        <taxon>Chordata</taxon>
        <taxon>Craniata</taxon>
        <taxon>Vertebrata</taxon>
        <taxon>Euteleostomi</taxon>
        <taxon>Mammalia</taxon>
        <taxon>Eutheria</taxon>
        <taxon>Euarchontoglires</taxon>
        <taxon>Glires</taxon>
        <taxon>Rodentia</taxon>
        <taxon>Myomorpha</taxon>
        <taxon>Muroidea</taxon>
        <taxon>Muridae</taxon>
        <taxon>Murinae</taxon>
        <taxon>Mus</taxon>
        <taxon>Mus</taxon>
    </lineage>
</organism>
<protein>
    <recommendedName>
        <fullName evidence="14">RNA-binding protein Nova-1</fullName>
    </recommendedName>
    <alternativeName>
        <fullName>Neuro-oncological ventral antigen 1</fullName>
    </alternativeName>
    <alternativeName>
        <fullName>Ventral neuron-specific protein 1</fullName>
    </alternativeName>
</protein>
<keyword id="KW-0507">mRNA processing</keyword>
<keyword id="KW-0508">mRNA splicing</keyword>
<keyword id="KW-0524">Neurogenesis</keyword>
<keyword id="KW-0539">Nucleus</keyword>
<keyword id="KW-0597">Phosphoprotein</keyword>
<keyword id="KW-1185">Reference proteome</keyword>
<keyword id="KW-0677">Repeat</keyword>
<keyword id="KW-0694">RNA-binding</keyword>